<name>UBIA_PROST</name>
<reference key="1">
    <citation type="journal article" date="1998" name="Antimicrob. Agents Chemother.">
        <title>Mutations in aarE, the ubiA homolog of Providencia stuartii, result in high-level aminoglycoside resistance and reduced expression of the chromosomal aminoglycoside 2'-N-acetyltransferase.</title>
        <authorList>
            <person name="Paradise M.R."/>
            <person name="Cook G.M."/>
            <person name="Poole R.K."/>
            <person name="Rather P.N."/>
        </authorList>
    </citation>
    <scope>NUCLEOTIDE SEQUENCE [GENOMIC DNA]</scope>
    <source>
        <strain>PR50</strain>
    </source>
</reference>
<evidence type="ECO:0000255" key="1">
    <source>
        <dbReference type="HAMAP-Rule" id="MF_01635"/>
    </source>
</evidence>
<accession>O52366</accession>
<proteinExistence type="inferred from homology"/>
<feature type="chain" id="PRO_0000162894" description="4-hydroxybenzoate octaprenyltransferase">
    <location>
        <begin position="1"/>
        <end position="288"/>
    </location>
</feature>
<feature type="transmembrane region" description="Helical" evidence="1">
    <location>
        <begin position="38"/>
        <end position="58"/>
    </location>
</feature>
<feature type="transmembrane region" description="Helical" evidence="1">
    <location>
        <begin position="98"/>
        <end position="120"/>
    </location>
</feature>
<feature type="transmembrane region" description="Helical" evidence="1">
    <location>
        <begin position="141"/>
        <end position="161"/>
    </location>
</feature>
<feature type="transmembrane region" description="Helical" evidence="1">
    <location>
        <begin position="163"/>
        <end position="183"/>
    </location>
</feature>
<feature type="transmembrane region" description="Helical" evidence="1">
    <location>
        <begin position="213"/>
        <end position="233"/>
    </location>
</feature>
<feature type="transmembrane region" description="Helical" evidence="1">
    <location>
        <begin position="238"/>
        <end position="258"/>
    </location>
</feature>
<feature type="transmembrane region" description="Helical" evidence="1">
    <location>
        <begin position="268"/>
        <end position="288"/>
    </location>
</feature>
<comment type="function">
    <text evidence="1">Catalyzes the prenylation of para-hydroxybenzoate (PHB) with an all-trans polyprenyl group. Mediates the second step in the final reaction sequence of ubiquinone-8 (UQ-8) biosynthesis, which is the condensation of the polyisoprenoid side chain with PHB, generating the first membrane-bound Q intermediate 3-octaprenyl-4-hydroxybenzoate.</text>
</comment>
<comment type="catalytic activity">
    <reaction evidence="1">
        <text>all-trans-octaprenyl diphosphate + 4-hydroxybenzoate = 4-hydroxy-3-(all-trans-octaprenyl)benzoate + diphosphate</text>
        <dbReference type="Rhea" id="RHEA:27782"/>
        <dbReference type="ChEBI" id="CHEBI:1617"/>
        <dbReference type="ChEBI" id="CHEBI:17879"/>
        <dbReference type="ChEBI" id="CHEBI:33019"/>
        <dbReference type="ChEBI" id="CHEBI:57711"/>
        <dbReference type="EC" id="2.5.1.39"/>
    </reaction>
</comment>
<comment type="cofactor">
    <cofactor evidence="1">
        <name>Mg(2+)</name>
        <dbReference type="ChEBI" id="CHEBI:18420"/>
    </cofactor>
</comment>
<comment type="pathway">
    <text evidence="1">Cofactor biosynthesis; ubiquinone biosynthesis.</text>
</comment>
<comment type="subcellular location">
    <subcellularLocation>
        <location evidence="1">Cell inner membrane</location>
        <topology evidence="1">Multi-pass membrane protein</topology>
    </subcellularLocation>
</comment>
<comment type="similarity">
    <text evidence="1">Belongs to the UbiA prenyltransferase family.</text>
</comment>
<organism>
    <name type="scientific">Providencia stuartii</name>
    <dbReference type="NCBI Taxonomy" id="588"/>
    <lineage>
        <taxon>Bacteria</taxon>
        <taxon>Pseudomonadati</taxon>
        <taxon>Pseudomonadota</taxon>
        <taxon>Gammaproteobacteria</taxon>
        <taxon>Enterobacterales</taxon>
        <taxon>Morganellaceae</taxon>
        <taxon>Providencia</taxon>
    </lineage>
</organism>
<dbReference type="EC" id="2.5.1.39" evidence="1"/>
<dbReference type="EMBL" id="AF036909">
    <property type="protein sequence ID" value="AAB88868.1"/>
    <property type="molecule type" value="Genomic_DNA"/>
</dbReference>
<dbReference type="SMR" id="O52366"/>
<dbReference type="STRING" id="588.BGK56_11420"/>
<dbReference type="UniPathway" id="UPA00232"/>
<dbReference type="GO" id="GO:0005886">
    <property type="term" value="C:plasma membrane"/>
    <property type="evidence" value="ECO:0007669"/>
    <property type="project" value="UniProtKB-SubCell"/>
</dbReference>
<dbReference type="GO" id="GO:0008412">
    <property type="term" value="F:4-hydroxybenzoate polyprenyltransferase activity"/>
    <property type="evidence" value="ECO:0007669"/>
    <property type="project" value="UniProtKB-UniRule"/>
</dbReference>
<dbReference type="GO" id="GO:0006744">
    <property type="term" value="P:ubiquinone biosynthetic process"/>
    <property type="evidence" value="ECO:0007669"/>
    <property type="project" value="UniProtKB-UniRule"/>
</dbReference>
<dbReference type="CDD" id="cd13959">
    <property type="entry name" value="PT_UbiA_COQ2"/>
    <property type="match status" value="1"/>
</dbReference>
<dbReference type="FunFam" id="1.10.357.140:FF:000002">
    <property type="entry name" value="4-hydroxybenzoate octaprenyltransferase"/>
    <property type="match status" value="1"/>
</dbReference>
<dbReference type="FunFam" id="1.20.120.1780:FF:000001">
    <property type="entry name" value="4-hydroxybenzoate octaprenyltransferase"/>
    <property type="match status" value="1"/>
</dbReference>
<dbReference type="Gene3D" id="1.10.357.140">
    <property type="entry name" value="UbiA prenyltransferase"/>
    <property type="match status" value="1"/>
</dbReference>
<dbReference type="Gene3D" id="1.20.120.1780">
    <property type="entry name" value="UbiA prenyltransferase"/>
    <property type="match status" value="1"/>
</dbReference>
<dbReference type="HAMAP" id="MF_01635">
    <property type="entry name" value="UbiA"/>
    <property type="match status" value="1"/>
</dbReference>
<dbReference type="InterPro" id="IPR006370">
    <property type="entry name" value="HB_polyprenyltransferase-like"/>
</dbReference>
<dbReference type="InterPro" id="IPR039653">
    <property type="entry name" value="Prenyltransferase"/>
</dbReference>
<dbReference type="InterPro" id="IPR000537">
    <property type="entry name" value="UbiA_prenyltransferase"/>
</dbReference>
<dbReference type="InterPro" id="IPR030470">
    <property type="entry name" value="UbiA_prenylTrfase_CS"/>
</dbReference>
<dbReference type="InterPro" id="IPR044878">
    <property type="entry name" value="UbiA_sf"/>
</dbReference>
<dbReference type="NCBIfam" id="TIGR01474">
    <property type="entry name" value="ubiA_proteo"/>
    <property type="match status" value="1"/>
</dbReference>
<dbReference type="PANTHER" id="PTHR11048:SF28">
    <property type="entry name" value="4-HYDROXYBENZOATE POLYPRENYLTRANSFERASE, MITOCHONDRIAL"/>
    <property type="match status" value="1"/>
</dbReference>
<dbReference type="PANTHER" id="PTHR11048">
    <property type="entry name" value="PRENYLTRANSFERASES"/>
    <property type="match status" value="1"/>
</dbReference>
<dbReference type="Pfam" id="PF01040">
    <property type="entry name" value="UbiA"/>
    <property type="match status" value="1"/>
</dbReference>
<dbReference type="PROSITE" id="PS00943">
    <property type="entry name" value="UBIA"/>
    <property type="match status" value="1"/>
</dbReference>
<keyword id="KW-0997">Cell inner membrane</keyword>
<keyword id="KW-1003">Cell membrane</keyword>
<keyword id="KW-0460">Magnesium</keyword>
<keyword id="KW-0472">Membrane</keyword>
<keyword id="KW-0808">Transferase</keyword>
<keyword id="KW-0812">Transmembrane</keyword>
<keyword id="KW-1133">Transmembrane helix</keyword>
<keyword id="KW-0831">Ubiquinone biosynthesis</keyword>
<gene>
    <name evidence="1" type="primary">ubiA</name>
    <name type="synonym">aarE</name>
</gene>
<protein>
    <recommendedName>
        <fullName evidence="1">4-hydroxybenzoate octaprenyltransferase</fullName>
        <ecNumber evidence="1">2.5.1.39</ecNumber>
    </recommendedName>
    <alternativeName>
        <fullName evidence="1">4-HB polyprenyltransferase</fullName>
    </alternativeName>
</protein>
<sequence>MEGSMALSKWHAYSRLMRIDRPIGSLLLLWPTYWALWIAAQSIPSLHILIVFTAGVFLMRAAGCVINDFADRHFDGHVERTKHRPLPSGDVTEKEAKILFASLVGLSFLLVLTLNSMTIWLSVAGLALAWIYPFVKRVSHLLQVVLGAAFGWSIPMGFSAVSESLPLVCWVLFLVNILWSVIYDTQYAMVDRNDDLKIGVKSTAILFGQYDKLIIGILQIVMIVLLVLVGSLADLGAVYYIALSLSALLFIYQQKLMVDRERAPCFKAFLNNNYVGLILFIGIFLSYL</sequence>